<protein>
    <recommendedName>
        <fullName evidence="1">Methylglyoxal synthase</fullName>
        <shortName evidence="1">MGS</shortName>
        <ecNumber evidence="1">4.2.3.3</ecNumber>
    </recommendedName>
</protein>
<keyword id="KW-0456">Lyase</keyword>
<accession>A7GN71</accession>
<dbReference type="EC" id="4.2.3.3" evidence="1"/>
<dbReference type="EMBL" id="CP000764">
    <property type="protein sequence ID" value="ABS21579.1"/>
    <property type="molecule type" value="Genomic_DNA"/>
</dbReference>
<dbReference type="RefSeq" id="WP_012093746.1">
    <property type="nucleotide sequence ID" value="NC_009674.1"/>
</dbReference>
<dbReference type="SMR" id="A7GN71"/>
<dbReference type="STRING" id="315749.Bcer98_1257"/>
<dbReference type="GeneID" id="33896606"/>
<dbReference type="KEGG" id="bcy:Bcer98_1257"/>
<dbReference type="eggNOG" id="COG1803">
    <property type="taxonomic scope" value="Bacteria"/>
</dbReference>
<dbReference type="HOGENOM" id="CLU_120420_1_0_9"/>
<dbReference type="OrthoDB" id="9787147at2"/>
<dbReference type="Proteomes" id="UP000002300">
    <property type="component" value="Chromosome"/>
</dbReference>
<dbReference type="GO" id="GO:0005829">
    <property type="term" value="C:cytosol"/>
    <property type="evidence" value="ECO:0007669"/>
    <property type="project" value="TreeGrafter"/>
</dbReference>
<dbReference type="GO" id="GO:0008929">
    <property type="term" value="F:methylglyoxal synthase activity"/>
    <property type="evidence" value="ECO:0007669"/>
    <property type="project" value="UniProtKB-UniRule"/>
</dbReference>
<dbReference type="GO" id="GO:0019242">
    <property type="term" value="P:methylglyoxal biosynthetic process"/>
    <property type="evidence" value="ECO:0007669"/>
    <property type="project" value="UniProtKB-UniRule"/>
</dbReference>
<dbReference type="CDD" id="cd01422">
    <property type="entry name" value="MGS"/>
    <property type="match status" value="1"/>
</dbReference>
<dbReference type="FunFam" id="3.40.50.1380:FF:000006">
    <property type="entry name" value="Methylglyoxal synthase"/>
    <property type="match status" value="1"/>
</dbReference>
<dbReference type="Gene3D" id="3.40.50.1380">
    <property type="entry name" value="Methylglyoxal synthase-like domain"/>
    <property type="match status" value="1"/>
</dbReference>
<dbReference type="HAMAP" id="MF_00549">
    <property type="entry name" value="Methylglyoxal_synth"/>
    <property type="match status" value="1"/>
</dbReference>
<dbReference type="InterPro" id="IPR004363">
    <property type="entry name" value="Methylgl_synth"/>
</dbReference>
<dbReference type="InterPro" id="IPR018148">
    <property type="entry name" value="Methylglyoxal_synth_AS"/>
</dbReference>
<dbReference type="InterPro" id="IPR011607">
    <property type="entry name" value="MGS-like_dom"/>
</dbReference>
<dbReference type="InterPro" id="IPR036914">
    <property type="entry name" value="MGS-like_dom_sf"/>
</dbReference>
<dbReference type="NCBIfam" id="TIGR00160">
    <property type="entry name" value="MGSA"/>
    <property type="match status" value="1"/>
</dbReference>
<dbReference type="NCBIfam" id="NF003559">
    <property type="entry name" value="PRK05234.1"/>
    <property type="match status" value="1"/>
</dbReference>
<dbReference type="PANTHER" id="PTHR30492">
    <property type="entry name" value="METHYLGLYOXAL SYNTHASE"/>
    <property type="match status" value="1"/>
</dbReference>
<dbReference type="PANTHER" id="PTHR30492:SF0">
    <property type="entry name" value="METHYLGLYOXAL SYNTHASE"/>
    <property type="match status" value="1"/>
</dbReference>
<dbReference type="Pfam" id="PF02142">
    <property type="entry name" value="MGS"/>
    <property type="match status" value="1"/>
</dbReference>
<dbReference type="PIRSF" id="PIRSF006614">
    <property type="entry name" value="Methylglyox_syn"/>
    <property type="match status" value="1"/>
</dbReference>
<dbReference type="SMART" id="SM00851">
    <property type="entry name" value="MGS"/>
    <property type="match status" value="1"/>
</dbReference>
<dbReference type="SUPFAM" id="SSF52335">
    <property type="entry name" value="Methylglyoxal synthase-like"/>
    <property type="match status" value="1"/>
</dbReference>
<dbReference type="PROSITE" id="PS01335">
    <property type="entry name" value="METHYLGLYOXAL_SYNTH"/>
    <property type="match status" value="1"/>
</dbReference>
<dbReference type="PROSITE" id="PS51855">
    <property type="entry name" value="MGS"/>
    <property type="match status" value="1"/>
</dbReference>
<organism>
    <name type="scientific">Bacillus cytotoxicus (strain DSM 22905 / CIP 110041 / 391-98 / NVH 391-98)</name>
    <dbReference type="NCBI Taxonomy" id="315749"/>
    <lineage>
        <taxon>Bacteria</taxon>
        <taxon>Bacillati</taxon>
        <taxon>Bacillota</taxon>
        <taxon>Bacilli</taxon>
        <taxon>Bacillales</taxon>
        <taxon>Bacillaceae</taxon>
        <taxon>Bacillus</taxon>
        <taxon>Bacillus cereus group</taxon>
    </lineage>
</organism>
<name>MGSA_BACCN</name>
<sequence>MKIALIAHDKKKDDMVSFAYAYKPIFEQHELFATGTTGLRVMEATGLAVTRYQSGPLGGDQEIGAMIAKNALDMVIFFRDPLTAQPHEPDVNALLRLCDVYAIPLATNMASAEMLMHALNRGDLDYRKFRK</sequence>
<comment type="function">
    <text evidence="1">Catalyzes the formation of methylglyoxal from dihydroxyacetone phosphate.</text>
</comment>
<comment type="catalytic activity">
    <reaction evidence="1">
        <text>dihydroxyacetone phosphate = methylglyoxal + phosphate</text>
        <dbReference type="Rhea" id="RHEA:17937"/>
        <dbReference type="ChEBI" id="CHEBI:17158"/>
        <dbReference type="ChEBI" id="CHEBI:43474"/>
        <dbReference type="ChEBI" id="CHEBI:57642"/>
        <dbReference type="EC" id="4.2.3.3"/>
    </reaction>
</comment>
<comment type="similarity">
    <text evidence="1">Belongs to the methylglyoxal synthase family.</text>
</comment>
<feature type="chain" id="PRO_1000081950" description="Methylglyoxal synthase">
    <location>
        <begin position="1"/>
        <end position="131"/>
    </location>
</feature>
<feature type="domain" description="MGS-like" evidence="1">
    <location>
        <begin position="1"/>
        <end position="131"/>
    </location>
</feature>
<feature type="active site" description="Proton donor/acceptor" evidence="1">
    <location>
        <position position="60"/>
    </location>
</feature>
<feature type="binding site" evidence="1">
    <location>
        <position position="8"/>
    </location>
    <ligand>
        <name>substrate</name>
    </ligand>
</feature>
<feature type="binding site" evidence="1">
    <location>
        <position position="12"/>
    </location>
    <ligand>
        <name>substrate</name>
    </ligand>
</feature>
<feature type="binding site" evidence="1">
    <location>
        <begin position="34"/>
        <end position="37"/>
    </location>
    <ligand>
        <name>substrate</name>
    </ligand>
</feature>
<feature type="binding site" evidence="1">
    <location>
        <begin position="54"/>
        <end position="55"/>
    </location>
    <ligand>
        <name>substrate</name>
    </ligand>
</feature>
<feature type="binding site" evidence="1">
    <location>
        <position position="87"/>
    </location>
    <ligand>
        <name>substrate</name>
    </ligand>
</feature>
<reference key="1">
    <citation type="journal article" date="2008" name="Chem. Biol. Interact.">
        <title>Extending the Bacillus cereus group genomics to putative food-borne pathogens of different toxicity.</title>
        <authorList>
            <person name="Lapidus A."/>
            <person name="Goltsman E."/>
            <person name="Auger S."/>
            <person name="Galleron N."/>
            <person name="Segurens B."/>
            <person name="Dossat C."/>
            <person name="Land M.L."/>
            <person name="Broussolle V."/>
            <person name="Brillard J."/>
            <person name="Guinebretiere M.-H."/>
            <person name="Sanchis V."/>
            <person name="Nguen-the C."/>
            <person name="Lereclus D."/>
            <person name="Richardson P."/>
            <person name="Wincker P."/>
            <person name="Weissenbach J."/>
            <person name="Ehrlich S.D."/>
            <person name="Sorokin A."/>
        </authorList>
    </citation>
    <scope>NUCLEOTIDE SEQUENCE [LARGE SCALE GENOMIC DNA]</scope>
    <source>
        <strain>DSM 22905 / CIP 110041 / 391-98 / NVH 391-98</strain>
    </source>
</reference>
<proteinExistence type="inferred from homology"/>
<evidence type="ECO:0000255" key="1">
    <source>
        <dbReference type="HAMAP-Rule" id="MF_00549"/>
    </source>
</evidence>
<gene>
    <name evidence="1" type="primary">mgsA</name>
    <name type="ordered locus">Bcer98_1257</name>
</gene>